<dbReference type="EC" id="4.2.3.5" evidence="1"/>
<dbReference type="EMBL" id="BX294144">
    <property type="protein sequence ID" value="CAD75026.1"/>
    <property type="molecule type" value="Genomic_DNA"/>
</dbReference>
<dbReference type="RefSeq" id="NP_867480.1">
    <property type="nucleotide sequence ID" value="NC_005027.1"/>
</dbReference>
<dbReference type="RefSeq" id="WP_011121116.1">
    <property type="nucleotide sequence ID" value="NC_005027.1"/>
</dbReference>
<dbReference type="SMR" id="Q7UPN5"/>
<dbReference type="FunCoup" id="Q7UPN5">
    <property type="interactions" value="458"/>
</dbReference>
<dbReference type="STRING" id="243090.RB6822"/>
<dbReference type="EnsemblBacteria" id="CAD75026">
    <property type="protein sequence ID" value="CAD75026"/>
    <property type="gene ID" value="RB6822"/>
</dbReference>
<dbReference type="KEGG" id="rba:RB6822"/>
<dbReference type="PATRIC" id="fig|243090.15.peg.3308"/>
<dbReference type="eggNOG" id="COG0082">
    <property type="taxonomic scope" value="Bacteria"/>
</dbReference>
<dbReference type="HOGENOM" id="CLU_034547_0_0_0"/>
<dbReference type="InParanoid" id="Q7UPN5"/>
<dbReference type="OrthoDB" id="9771806at2"/>
<dbReference type="UniPathway" id="UPA00053">
    <property type="reaction ID" value="UER00090"/>
</dbReference>
<dbReference type="Proteomes" id="UP000001025">
    <property type="component" value="Chromosome"/>
</dbReference>
<dbReference type="GO" id="GO:0005829">
    <property type="term" value="C:cytosol"/>
    <property type="evidence" value="ECO:0000318"/>
    <property type="project" value="GO_Central"/>
</dbReference>
<dbReference type="GO" id="GO:0004107">
    <property type="term" value="F:chorismate synthase activity"/>
    <property type="evidence" value="ECO:0000318"/>
    <property type="project" value="GO_Central"/>
</dbReference>
<dbReference type="GO" id="GO:0010181">
    <property type="term" value="F:FMN binding"/>
    <property type="evidence" value="ECO:0000318"/>
    <property type="project" value="GO_Central"/>
</dbReference>
<dbReference type="GO" id="GO:0008652">
    <property type="term" value="P:amino acid biosynthetic process"/>
    <property type="evidence" value="ECO:0007669"/>
    <property type="project" value="UniProtKB-KW"/>
</dbReference>
<dbReference type="GO" id="GO:0009073">
    <property type="term" value="P:aromatic amino acid family biosynthetic process"/>
    <property type="evidence" value="ECO:0000318"/>
    <property type="project" value="GO_Central"/>
</dbReference>
<dbReference type="GO" id="GO:0009423">
    <property type="term" value="P:chorismate biosynthetic process"/>
    <property type="evidence" value="ECO:0000318"/>
    <property type="project" value="GO_Central"/>
</dbReference>
<dbReference type="FunFam" id="3.60.150.10:FF:000016">
    <property type="entry name" value="Chorismate synthase"/>
    <property type="match status" value="1"/>
</dbReference>
<dbReference type="Gene3D" id="3.60.150.10">
    <property type="entry name" value="Chorismate synthase AroC"/>
    <property type="match status" value="1"/>
</dbReference>
<dbReference type="HAMAP" id="MF_00300">
    <property type="entry name" value="Chorismate_synth"/>
    <property type="match status" value="1"/>
</dbReference>
<dbReference type="InterPro" id="IPR000453">
    <property type="entry name" value="Chorismate_synth"/>
</dbReference>
<dbReference type="InterPro" id="IPR035904">
    <property type="entry name" value="Chorismate_synth_AroC_sf"/>
</dbReference>
<dbReference type="PANTHER" id="PTHR21085">
    <property type="entry name" value="CHORISMATE SYNTHASE"/>
    <property type="match status" value="1"/>
</dbReference>
<dbReference type="PANTHER" id="PTHR21085:SF0">
    <property type="entry name" value="CHORISMATE SYNTHASE"/>
    <property type="match status" value="1"/>
</dbReference>
<dbReference type="Pfam" id="PF01264">
    <property type="entry name" value="Chorismate_synt"/>
    <property type="match status" value="2"/>
</dbReference>
<dbReference type="PIRSF" id="PIRSF001456">
    <property type="entry name" value="Chorismate_synth"/>
    <property type="match status" value="1"/>
</dbReference>
<dbReference type="SUPFAM" id="SSF103263">
    <property type="entry name" value="Chorismate synthase, AroC"/>
    <property type="match status" value="1"/>
</dbReference>
<feature type="chain" id="PRO_0000405971" description="Chorismate synthase">
    <location>
        <begin position="1"/>
        <end position="404"/>
    </location>
</feature>
<feature type="binding site" evidence="1">
    <location>
        <position position="47"/>
    </location>
    <ligand>
        <name>NADP(+)</name>
        <dbReference type="ChEBI" id="CHEBI:58349"/>
    </ligand>
</feature>
<feature type="binding site" evidence="1">
    <location>
        <begin position="156"/>
        <end position="158"/>
    </location>
    <ligand>
        <name>FMN</name>
        <dbReference type="ChEBI" id="CHEBI:58210"/>
    </ligand>
</feature>
<feature type="binding site" evidence="1">
    <location>
        <begin position="281"/>
        <end position="282"/>
    </location>
    <ligand>
        <name>FMN</name>
        <dbReference type="ChEBI" id="CHEBI:58210"/>
    </ligand>
</feature>
<feature type="binding site" evidence="1">
    <location>
        <position position="321"/>
    </location>
    <ligand>
        <name>FMN</name>
        <dbReference type="ChEBI" id="CHEBI:58210"/>
    </ligand>
</feature>
<feature type="binding site" evidence="1">
    <location>
        <begin position="336"/>
        <end position="340"/>
    </location>
    <ligand>
        <name>FMN</name>
        <dbReference type="ChEBI" id="CHEBI:58210"/>
    </ligand>
</feature>
<feature type="binding site" evidence="1">
    <location>
        <position position="363"/>
    </location>
    <ligand>
        <name>FMN</name>
        <dbReference type="ChEBI" id="CHEBI:58210"/>
    </ligand>
</feature>
<comment type="function">
    <text evidence="1">Catalyzes the anti-1,4-elimination of the C-3 phosphate and the C-6 proR hydrogen from 5-enolpyruvylshikimate-3-phosphate (EPSP) to yield chorismate, which is the branch point compound that serves as the starting substrate for the three terminal pathways of aromatic amino acid biosynthesis. This reaction introduces a second double bond into the aromatic ring system.</text>
</comment>
<comment type="catalytic activity">
    <reaction evidence="1">
        <text>5-O-(1-carboxyvinyl)-3-phosphoshikimate = chorismate + phosphate</text>
        <dbReference type="Rhea" id="RHEA:21020"/>
        <dbReference type="ChEBI" id="CHEBI:29748"/>
        <dbReference type="ChEBI" id="CHEBI:43474"/>
        <dbReference type="ChEBI" id="CHEBI:57701"/>
        <dbReference type="EC" id="4.2.3.5"/>
    </reaction>
</comment>
<comment type="cofactor">
    <cofactor evidence="1">
        <name>FMNH2</name>
        <dbReference type="ChEBI" id="CHEBI:57618"/>
    </cofactor>
    <text evidence="1">Reduced FMN (FMNH(2)).</text>
</comment>
<comment type="pathway">
    <text evidence="1">Metabolic intermediate biosynthesis; chorismate biosynthesis; chorismate from D-erythrose 4-phosphate and phosphoenolpyruvate: step 7/7.</text>
</comment>
<comment type="subunit">
    <text evidence="1">Homotetramer.</text>
</comment>
<comment type="similarity">
    <text evidence="1">Belongs to the chorismate synthase family.</text>
</comment>
<evidence type="ECO:0000255" key="1">
    <source>
        <dbReference type="HAMAP-Rule" id="MF_00300"/>
    </source>
</evidence>
<gene>
    <name evidence="1" type="primary">aroC</name>
    <name type="ordered locus">RB6822</name>
</gene>
<name>AROC_RHOBA</name>
<accession>Q7UPN5</accession>
<keyword id="KW-0028">Amino-acid biosynthesis</keyword>
<keyword id="KW-0057">Aromatic amino acid biosynthesis</keyword>
<keyword id="KW-0274">FAD</keyword>
<keyword id="KW-0285">Flavoprotein</keyword>
<keyword id="KW-0288">FMN</keyword>
<keyword id="KW-0456">Lyase</keyword>
<keyword id="KW-0521">NADP</keyword>
<keyword id="KW-1185">Reference proteome</keyword>
<proteinExistence type="inferred from homology"/>
<sequence length="404" mass="42918">MEILGGPHFAVAGAGESHGPAVTTIIHGSPPGFRIRRCDVQPFLDRRRPGGNKHGTPRNEKDKVVFLAGLYRDDTDALLTGSKLTVDVDDQSFETEGYEDGFTTGEPIAAIVLSTSKKSGDYTQFSGPTGEVRPGHTDLVKFHQSKGFVDVRGGGRSSYRSTITDVIGGSVARIILRECFGTRFVSSICQVGSLKSKQSLADTLTIDNIDEIETSLGEAEIASIDHEFANEAGELIKETRKRGNSLGAAVEVVAVGVPPLLGQPLYQSLKVRLMGALGGLNAVQSCEIGSGVDVIPRTGSENNDPIRSSGYQSNTHGGLLGGITTGSPLVARVGFKPTSTINLPQDSVNKRLDEIEFELAKGRHDPCVGVRAGVTLESRMAIELLNSVLAYQATAHCGDSIKLF</sequence>
<protein>
    <recommendedName>
        <fullName evidence="1">Chorismate synthase</fullName>
        <shortName evidence="1">CS</shortName>
        <ecNumber evidence="1">4.2.3.5</ecNumber>
    </recommendedName>
    <alternativeName>
        <fullName evidence="1">5-enolpyruvylshikimate-3-phosphate phospholyase</fullName>
    </alternativeName>
</protein>
<organism>
    <name type="scientific">Rhodopirellula baltica (strain DSM 10527 / NCIMB 13988 / SH1)</name>
    <dbReference type="NCBI Taxonomy" id="243090"/>
    <lineage>
        <taxon>Bacteria</taxon>
        <taxon>Pseudomonadati</taxon>
        <taxon>Planctomycetota</taxon>
        <taxon>Planctomycetia</taxon>
        <taxon>Pirellulales</taxon>
        <taxon>Pirellulaceae</taxon>
        <taxon>Rhodopirellula</taxon>
    </lineage>
</organism>
<reference key="1">
    <citation type="journal article" date="2003" name="Proc. Natl. Acad. Sci. U.S.A.">
        <title>Complete genome sequence of the marine planctomycete Pirellula sp. strain 1.</title>
        <authorList>
            <person name="Gloeckner F.O."/>
            <person name="Kube M."/>
            <person name="Bauer M."/>
            <person name="Teeling H."/>
            <person name="Lombardot T."/>
            <person name="Ludwig W."/>
            <person name="Gade D."/>
            <person name="Beck A."/>
            <person name="Borzym K."/>
            <person name="Heitmann K."/>
            <person name="Rabus R."/>
            <person name="Schlesner H."/>
            <person name="Amann R."/>
            <person name="Reinhardt R."/>
        </authorList>
    </citation>
    <scope>NUCLEOTIDE SEQUENCE [LARGE SCALE GENOMIC DNA]</scope>
    <source>
        <strain>DSM 10527 / NCIMB 13988 / SH1</strain>
    </source>
</reference>